<proteinExistence type="inferred from homology"/>
<reference key="1">
    <citation type="journal article" date="2003" name="Proc. Natl. Acad. Sci. U.S.A.">
        <title>Complete genome sequence of Lactobacillus plantarum WCFS1.</title>
        <authorList>
            <person name="Kleerebezem M."/>
            <person name="Boekhorst J."/>
            <person name="van Kranenburg R."/>
            <person name="Molenaar D."/>
            <person name="Kuipers O.P."/>
            <person name="Leer R."/>
            <person name="Tarchini R."/>
            <person name="Peters S.A."/>
            <person name="Sandbrink H.M."/>
            <person name="Fiers M.W.E.J."/>
            <person name="Stiekema W."/>
            <person name="Klein Lankhorst R.M."/>
            <person name="Bron P.A."/>
            <person name="Hoffer S.M."/>
            <person name="Nierop Groot M.N."/>
            <person name="Kerkhoven R."/>
            <person name="De Vries M."/>
            <person name="Ursing B."/>
            <person name="De Vos W.M."/>
            <person name="Siezen R.J."/>
        </authorList>
    </citation>
    <scope>NUCLEOTIDE SEQUENCE [LARGE SCALE GENOMIC DNA]</scope>
    <source>
        <strain>ATCC BAA-793 / NCIMB 8826 / WCFS1</strain>
    </source>
</reference>
<reference key="2">
    <citation type="journal article" date="2012" name="J. Bacteriol.">
        <title>Complete resequencing and reannotation of the Lactobacillus plantarum WCFS1 genome.</title>
        <authorList>
            <person name="Siezen R.J."/>
            <person name="Francke C."/>
            <person name="Renckens B."/>
            <person name="Boekhorst J."/>
            <person name="Wels M."/>
            <person name="Kleerebezem M."/>
            <person name="van Hijum S.A."/>
        </authorList>
    </citation>
    <scope>NUCLEOTIDE SEQUENCE [LARGE SCALE GENOMIC DNA]</scope>
    <scope>GENOME REANNOTATION</scope>
    <source>
        <strain>ATCC BAA-793 / NCIMB 8826 / WCFS1</strain>
    </source>
</reference>
<feature type="chain" id="PRO_0000092024" description="Putative ABC transporter ATP-binding protein lp_0149">
    <location>
        <begin position="1"/>
        <end position="566"/>
    </location>
</feature>
<feature type="domain" description="ABC transporter 1" evidence="2">
    <location>
        <begin position="6"/>
        <end position="247"/>
    </location>
</feature>
<feature type="domain" description="ABC transporter 2" evidence="2">
    <location>
        <begin position="302"/>
        <end position="536"/>
    </location>
</feature>
<feature type="binding site" evidence="2">
    <location>
        <begin position="40"/>
        <end position="47"/>
    </location>
    <ligand>
        <name>ATP</name>
        <dbReference type="ChEBI" id="CHEBI:30616"/>
    </ligand>
</feature>
<feature type="binding site" evidence="2">
    <location>
        <begin position="335"/>
        <end position="342"/>
    </location>
    <ligand>
        <name>ATP</name>
        <dbReference type="ChEBI" id="CHEBI:30616"/>
    </ligand>
</feature>
<keyword id="KW-0067">ATP-binding</keyword>
<keyword id="KW-1003">Cell membrane</keyword>
<keyword id="KW-0472">Membrane</keyword>
<keyword id="KW-0547">Nucleotide-binding</keyword>
<keyword id="KW-1185">Reference proteome</keyword>
<keyword id="KW-0677">Repeat</keyword>
<keyword id="KW-1278">Translocase</keyword>
<keyword id="KW-0813">Transport</keyword>
<dbReference type="EC" id="7.-.-.-"/>
<dbReference type="EMBL" id="AL935263">
    <property type="protein sequence ID" value="CCC77696.1"/>
    <property type="molecule type" value="Genomic_DNA"/>
</dbReference>
<dbReference type="RefSeq" id="WP_011100903.1">
    <property type="nucleotide sequence ID" value="NC_004567.2"/>
</dbReference>
<dbReference type="RefSeq" id="YP_004888210.1">
    <property type="nucleotide sequence ID" value="NC_004567.2"/>
</dbReference>
<dbReference type="SMR" id="Q88ZZ2"/>
<dbReference type="STRING" id="220668.lp_0149"/>
<dbReference type="EnsemblBacteria" id="CCC77696">
    <property type="protein sequence ID" value="CCC77696"/>
    <property type="gene ID" value="lp_0149"/>
</dbReference>
<dbReference type="KEGG" id="lpl:lp_0149"/>
<dbReference type="PATRIC" id="fig|220668.9.peg.120"/>
<dbReference type="eggNOG" id="COG1122">
    <property type="taxonomic scope" value="Bacteria"/>
</dbReference>
<dbReference type="HOGENOM" id="CLU_000604_86_7_9"/>
<dbReference type="OrthoDB" id="501320at2"/>
<dbReference type="PhylomeDB" id="Q88ZZ2"/>
<dbReference type="Proteomes" id="UP000000432">
    <property type="component" value="Chromosome"/>
</dbReference>
<dbReference type="GO" id="GO:0043190">
    <property type="term" value="C:ATP-binding cassette (ABC) transporter complex"/>
    <property type="evidence" value="ECO:0007669"/>
    <property type="project" value="TreeGrafter"/>
</dbReference>
<dbReference type="GO" id="GO:0005524">
    <property type="term" value="F:ATP binding"/>
    <property type="evidence" value="ECO:0007669"/>
    <property type="project" value="UniProtKB-KW"/>
</dbReference>
<dbReference type="GO" id="GO:0016887">
    <property type="term" value="F:ATP hydrolysis activity"/>
    <property type="evidence" value="ECO:0007669"/>
    <property type="project" value="InterPro"/>
</dbReference>
<dbReference type="GO" id="GO:0042626">
    <property type="term" value="F:ATPase-coupled transmembrane transporter activity"/>
    <property type="evidence" value="ECO:0007669"/>
    <property type="project" value="TreeGrafter"/>
</dbReference>
<dbReference type="CDD" id="cd03225">
    <property type="entry name" value="ABC_cobalt_CbiO_domain1"/>
    <property type="match status" value="2"/>
</dbReference>
<dbReference type="FunFam" id="3.40.50.300:FF:001422">
    <property type="entry name" value="Cobalt ABC transporter ATP-binding protein"/>
    <property type="match status" value="1"/>
</dbReference>
<dbReference type="FunFam" id="3.40.50.300:FF:000224">
    <property type="entry name" value="Energy-coupling factor transporter ATP-binding protein EcfA"/>
    <property type="match status" value="1"/>
</dbReference>
<dbReference type="Gene3D" id="3.40.50.300">
    <property type="entry name" value="P-loop containing nucleotide triphosphate hydrolases"/>
    <property type="match status" value="2"/>
</dbReference>
<dbReference type="InterPro" id="IPR003593">
    <property type="entry name" value="AAA+_ATPase"/>
</dbReference>
<dbReference type="InterPro" id="IPR022216">
    <property type="entry name" value="ABC_Co_transporter"/>
</dbReference>
<dbReference type="InterPro" id="IPR003439">
    <property type="entry name" value="ABC_transporter-like_ATP-bd"/>
</dbReference>
<dbReference type="InterPro" id="IPR017871">
    <property type="entry name" value="ABC_transporter-like_CS"/>
</dbReference>
<dbReference type="InterPro" id="IPR015856">
    <property type="entry name" value="ABC_transpr_CbiO/EcfA_su"/>
</dbReference>
<dbReference type="InterPro" id="IPR050095">
    <property type="entry name" value="ECF_ABC_transporter_ATP-bd"/>
</dbReference>
<dbReference type="InterPro" id="IPR027417">
    <property type="entry name" value="P-loop_NTPase"/>
</dbReference>
<dbReference type="NCBIfam" id="NF010167">
    <property type="entry name" value="PRK13648.1"/>
    <property type="match status" value="2"/>
</dbReference>
<dbReference type="PANTHER" id="PTHR43553:SF26">
    <property type="entry name" value="ABC TRANSPORTER ATP-BINDING PROTEIN BC_2655-RELATED"/>
    <property type="match status" value="1"/>
</dbReference>
<dbReference type="PANTHER" id="PTHR43553">
    <property type="entry name" value="HEAVY METAL TRANSPORTER"/>
    <property type="match status" value="1"/>
</dbReference>
<dbReference type="Pfam" id="PF00005">
    <property type="entry name" value="ABC_tran"/>
    <property type="match status" value="2"/>
</dbReference>
<dbReference type="Pfam" id="PF12558">
    <property type="entry name" value="DUF3744"/>
    <property type="match status" value="1"/>
</dbReference>
<dbReference type="SMART" id="SM00382">
    <property type="entry name" value="AAA"/>
    <property type="match status" value="2"/>
</dbReference>
<dbReference type="SUPFAM" id="SSF52540">
    <property type="entry name" value="P-loop containing nucleoside triphosphate hydrolases"/>
    <property type="match status" value="2"/>
</dbReference>
<dbReference type="PROSITE" id="PS00211">
    <property type="entry name" value="ABC_TRANSPORTER_1"/>
    <property type="match status" value="2"/>
</dbReference>
<dbReference type="PROSITE" id="PS50893">
    <property type="entry name" value="ABC_TRANSPORTER_2"/>
    <property type="match status" value="2"/>
</dbReference>
<gene>
    <name type="ordered locus">lp_0149</name>
</gene>
<name>Y149_LACPL</name>
<comment type="function">
    <text evidence="1">Probably part of an ABC transporter complex. Responsible for energy coupling to the transport system (By similarity).</text>
</comment>
<comment type="subcellular location">
    <subcellularLocation>
        <location evidence="1">Cell membrane</location>
        <topology evidence="1">Peripheral membrane protein</topology>
    </subcellularLocation>
</comment>
<comment type="similarity">
    <text evidence="3">Belongs to the ABC transporter superfamily.</text>
</comment>
<protein>
    <recommendedName>
        <fullName>Putative ABC transporter ATP-binding protein lp_0149</fullName>
        <ecNumber>7.-.-.-</ecNumber>
    </recommendedName>
</protein>
<accession>Q88ZZ2</accession>
<accession>F9USW5</accession>
<evidence type="ECO:0000250" key="1"/>
<evidence type="ECO:0000255" key="2">
    <source>
        <dbReference type="PROSITE-ProRule" id="PRU00434"/>
    </source>
</evidence>
<evidence type="ECO:0000305" key="3"/>
<sequence>MSAPIISFKNFSFQYNSQTEPTLRDINLDIYPGEKVLIAGPSGSGKSTLGRCLNGLIPQSYPGTVTGQARIAGQTITESSIFALSQDVGTVLQDPDSQFVGLTVVEDMAFSLENDQQTQPAMRQATEQWAQTLDLQDLLTHRPQELSGGQKQRVAMAGVLIDNSKILLFDEPLASLDPASGKASMALIDQLTHTQDLTVIIIEHRIEDVLQQPIDRLIVMQDGAIVANDRPETILRQSLMTQLGLREPLYLSALKLAGVDLATCQHLDNLQALQVPDLTATLQNWTTGVQLQSPTVHDQPLLAIEHLTFGYDPAKPIINDITVTLHQGEMISLVGQNGTGKSTLSNLITGFLMPQSGKMRFNGHSLADQSVKERADQIGYILQDPNQMISTTMIFDEVAAGLVLRGVADDEVKRRVQAVLKVCGLYEFRHWPISALSFGQKKRVTIAAILVLEPAMLILDEPTAGQDLQHYTEMMTFLTKINQEQHMTIMLITHDMHLMLEYTDRTIVLGHGNILMDARPADVLTNASIIQQASLAKTSLYTLAEAHHLNPTEFVAKFVQAEREAR</sequence>
<organism>
    <name type="scientific">Lactiplantibacillus plantarum (strain ATCC BAA-793 / NCIMB 8826 / WCFS1)</name>
    <name type="common">Lactobacillus plantarum</name>
    <dbReference type="NCBI Taxonomy" id="220668"/>
    <lineage>
        <taxon>Bacteria</taxon>
        <taxon>Bacillati</taxon>
        <taxon>Bacillota</taxon>
        <taxon>Bacilli</taxon>
        <taxon>Lactobacillales</taxon>
        <taxon>Lactobacillaceae</taxon>
        <taxon>Lactiplantibacillus</taxon>
    </lineage>
</organism>